<dbReference type="EC" id="2.7.7.7"/>
<dbReference type="EMBL" id="Y08257">
    <property type="protein sequence ID" value="CAA69570.1"/>
    <property type="molecule type" value="Genomic_DNA"/>
</dbReference>
<dbReference type="EMBL" id="AE006641">
    <property type="protein sequence ID" value="AAK40441.1"/>
    <property type="molecule type" value="Genomic_DNA"/>
</dbReference>
<dbReference type="PIR" id="S75407">
    <property type="entry name" value="S75407"/>
</dbReference>
<dbReference type="RefSeq" id="WP_009988892.1">
    <property type="nucleotide sequence ID" value="NC_002754.1"/>
</dbReference>
<dbReference type="SMR" id="P95979"/>
<dbReference type="FunCoup" id="P95979">
    <property type="interactions" value="34"/>
</dbReference>
<dbReference type="STRING" id="273057.SSO0081"/>
<dbReference type="PaxDb" id="273057-SSO0081"/>
<dbReference type="EnsemblBacteria" id="AAK40441">
    <property type="protein sequence ID" value="AAK40441"/>
    <property type="gene ID" value="SSO0081"/>
</dbReference>
<dbReference type="KEGG" id="sso:SSO0081"/>
<dbReference type="PATRIC" id="fig|273057.12.peg.80"/>
<dbReference type="eggNOG" id="arCOG00328">
    <property type="taxonomic scope" value="Archaea"/>
</dbReference>
<dbReference type="HOGENOM" id="CLU_000203_6_0_2"/>
<dbReference type="InParanoid" id="P95979"/>
<dbReference type="PhylomeDB" id="P95979"/>
<dbReference type="BRENDA" id="2.7.7.7">
    <property type="organism ID" value="6163"/>
</dbReference>
<dbReference type="Proteomes" id="UP000001974">
    <property type="component" value="Chromosome"/>
</dbReference>
<dbReference type="GO" id="GO:0003677">
    <property type="term" value="F:DNA binding"/>
    <property type="evidence" value="ECO:0007669"/>
    <property type="project" value="UniProtKB-KW"/>
</dbReference>
<dbReference type="GO" id="GO:0003887">
    <property type="term" value="F:DNA-directed DNA polymerase activity"/>
    <property type="evidence" value="ECO:0000318"/>
    <property type="project" value="GO_Central"/>
</dbReference>
<dbReference type="GO" id="GO:0000166">
    <property type="term" value="F:nucleotide binding"/>
    <property type="evidence" value="ECO:0007669"/>
    <property type="project" value="InterPro"/>
</dbReference>
<dbReference type="GO" id="GO:0006261">
    <property type="term" value="P:DNA-templated DNA replication"/>
    <property type="evidence" value="ECO:0000318"/>
    <property type="project" value="GO_Central"/>
</dbReference>
<dbReference type="CDD" id="cd05781">
    <property type="entry name" value="DNA_polB_B3_exo"/>
    <property type="match status" value="1"/>
</dbReference>
<dbReference type="FunFam" id="3.30.420.10:FF:000273">
    <property type="entry name" value="DNA polymerase 3"/>
    <property type="match status" value="1"/>
</dbReference>
<dbReference type="Gene3D" id="1.10.132.60">
    <property type="entry name" value="DNA polymerase family B, C-terminal domain"/>
    <property type="match status" value="1"/>
</dbReference>
<dbReference type="Gene3D" id="3.30.342.10">
    <property type="entry name" value="DNA Polymerase, chain B, domain 1"/>
    <property type="match status" value="1"/>
</dbReference>
<dbReference type="Gene3D" id="3.90.1600.10">
    <property type="entry name" value="Palm domain of DNA polymerase"/>
    <property type="match status" value="1"/>
</dbReference>
<dbReference type="Gene3D" id="3.30.420.10">
    <property type="entry name" value="Ribonuclease H-like superfamily/Ribonuclease H"/>
    <property type="match status" value="1"/>
</dbReference>
<dbReference type="InterPro" id="IPR006172">
    <property type="entry name" value="DNA-dir_DNA_pol_B"/>
</dbReference>
<dbReference type="InterPro" id="IPR006133">
    <property type="entry name" value="DNA-dir_DNA_pol_B_exonuc"/>
</dbReference>
<dbReference type="InterPro" id="IPR006134">
    <property type="entry name" value="DNA-dir_DNA_pol_B_multi_dom"/>
</dbReference>
<dbReference type="InterPro" id="IPR043502">
    <property type="entry name" value="DNA/RNA_pol_sf"/>
</dbReference>
<dbReference type="InterPro" id="IPR042087">
    <property type="entry name" value="DNA_pol_B_thumb"/>
</dbReference>
<dbReference type="InterPro" id="IPR023211">
    <property type="entry name" value="DNA_pol_palm_dom_sf"/>
</dbReference>
<dbReference type="InterPro" id="IPR050240">
    <property type="entry name" value="DNA_pol_type-B"/>
</dbReference>
<dbReference type="InterPro" id="IPR012337">
    <property type="entry name" value="RNaseH-like_sf"/>
</dbReference>
<dbReference type="InterPro" id="IPR036397">
    <property type="entry name" value="RNaseH_sf"/>
</dbReference>
<dbReference type="PANTHER" id="PTHR10322">
    <property type="entry name" value="DNA POLYMERASE CATALYTIC SUBUNIT"/>
    <property type="match status" value="1"/>
</dbReference>
<dbReference type="PANTHER" id="PTHR10322:SF23">
    <property type="entry name" value="DNA POLYMERASE DELTA CATALYTIC SUBUNIT"/>
    <property type="match status" value="1"/>
</dbReference>
<dbReference type="Pfam" id="PF00136">
    <property type="entry name" value="DNA_pol_B"/>
    <property type="match status" value="2"/>
</dbReference>
<dbReference type="Pfam" id="PF03104">
    <property type="entry name" value="DNA_pol_B_exo1"/>
    <property type="match status" value="1"/>
</dbReference>
<dbReference type="SMART" id="SM00486">
    <property type="entry name" value="POLBc"/>
    <property type="match status" value="1"/>
</dbReference>
<dbReference type="SUPFAM" id="SSF56672">
    <property type="entry name" value="DNA/RNA polymerases"/>
    <property type="match status" value="1"/>
</dbReference>
<dbReference type="SUPFAM" id="SSF53098">
    <property type="entry name" value="Ribonuclease H-like"/>
    <property type="match status" value="1"/>
</dbReference>
<sequence>MIKDFFILDFSYEIKGNTPLVYIWSVDDEGNSSVVIDNNFRPYFYIIYEGNENEIIENIKKNCEALQITKVKRKYLGNIVDALLIQTSTPTQIKKCREKISELNNIKGIFDADIRYTMRYSLDFDLRPFTWFRAEVNEVKFDGFRTKKAYILDKILSHYEGNMPELRTIGVDFQIYSKYGSLNPRKDPIVVMSLWSKEGPMQFSLDEGIDDLKIIRRFVDYILNYDPDIIFVYDSDLLPWKYITERASSLGVKIDIGRKIGSEVSVGTYGHYSISGRLNVDLTGLLVNERSLGHVDLIDVSNYLGISPSRYSFKWYEISRYWDNEKNRRIIREYSIENARSIYLLGNYLLSTYSELVKIVGLPLDKLSVASWGNRIETSLIRTATKSGELIPIRMDNPNRPSKIKKNIIIQPKVGIYTDVYVLDISSVYSLVIRKFNIAPDTLVKEQCDDCYSSPISNYKFKREPSGLYKTFLDELSNVRDSNKIKVIEELISSFNDYVHWVNARWYSREIASAFDEFSNEIIRFIIDLIKSSGLDVILANDLLIFVTGGSRDKVNELITKINSLYNLDVKVKIFYKSLLVLDNNRYAGLSEGDKIDIARKGEEDMNLCELARNIKRKIIEEILISKDVKKAIKLVKSTVIKLRRGEFDNEELITWAKIERDLNEYNNQLPFVTAARKAIQSGYLISKDSKIGYVIVKGLGPLNDRAEPFFLVKEKNRIDIEYYVDQIFRETLKLLKPLGVNEESLKKTNITDILDLFGASKKK</sequence>
<organism>
    <name type="scientific">Saccharolobus solfataricus (strain ATCC 35092 / DSM 1617 / JCM 11322 / P2)</name>
    <name type="common">Sulfolobus solfataricus</name>
    <dbReference type="NCBI Taxonomy" id="273057"/>
    <lineage>
        <taxon>Archaea</taxon>
        <taxon>Thermoproteota</taxon>
        <taxon>Thermoprotei</taxon>
        <taxon>Sulfolobales</taxon>
        <taxon>Sulfolobaceae</taxon>
        <taxon>Saccharolobus</taxon>
    </lineage>
</organism>
<reference key="1">
    <citation type="journal article" date="1996" name="Mol. Microbiol.">
        <title>Organizational characteristics and information content of an archaeal genome: 156 kb of sequence from Sulfolobus solfataricus P2.</title>
        <authorList>
            <person name="Sensen C.W."/>
            <person name="Klenk H.-P."/>
            <person name="Singh R.K."/>
            <person name="Allard G."/>
            <person name="Chan C.C.-Y."/>
            <person name="Liu Q.Y."/>
            <person name="Penny S.L."/>
            <person name="Young F."/>
            <person name="Schenk M.E."/>
            <person name="Gaasterland T."/>
            <person name="Doolittle W.F."/>
            <person name="Ragan M.A."/>
            <person name="Charlebois R.L."/>
        </authorList>
    </citation>
    <scope>NUCLEOTIDE SEQUENCE [GENOMIC DNA]</scope>
    <source>
        <strain>ATCC 35092 / DSM 1617 / JCM 11322 / P2</strain>
    </source>
</reference>
<reference key="2">
    <citation type="journal article" date="2001" name="Proc. Natl. Acad. Sci. U.S.A.">
        <title>The complete genome of the crenarchaeon Sulfolobus solfataricus P2.</title>
        <authorList>
            <person name="She Q."/>
            <person name="Singh R.K."/>
            <person name="Confalonieri F."/>
            <person name="Zivanovic Y."/>
            <person name="Allard G."/>
            <person name="Awayez M.J."/>
            <person name="Chan-Weiher C.C.-Y."/>
            <person name="Clausen I.G."/>
            <person name="Curtis B.A."/>
            <person name="De Moors A."/>
            <person name="Erauso G."/>
            <person name="Fletcher C."/>
            <person name="Gordon P.M.K."/>
            <person name="Heikamp-de Jong I."/>
            <person name="Jeffries A.C."/>
            <person name="Kozera C.J."/>
            <person name="Medina N."/>
            <person name="Peng X."/>
            <person name="Thi-Ngoc H.P."/>
            <person name="Redder P."/>
            <person name="Schenk M.E."/>
            <person name="Theriault C."/>
            <person name="Tolstrup N."/>
            <person name="Charlebois R.L."/>
            <person name="Doolittle W.F."/>
            <person name="Duguet M."/>
            <person name="Gaasterland T."/>
            <person name="Garrett R.A."/>
            <person name="Ragan M.A."/>
            <person name="Sensen C.W."/>
            <person name="Van der Oost J."/>
        </authorList>
    </citation>
    <scope>NUCLEOTIDE SEQUENCE [LARGE SCALE GENOMIC DNA]</scope>
    <source>
        <strain>ATCC 35092 / DSM 1617 / JCM 11322 / P2</strain>
    </source>
</reference>
<reference key="3">
    <citation type="journal article" date="1997" name="J. Bacteriol.">
        <title>Gene duplications in evolution of archaeal family B DNA polymerases.</title>
        <authorList>
            <person name="Edgell D.R."/>
            <person name="Klenk H.-P."/>
            <person name="Doolittle W.F."/>
        </authorList>
    </citation>
    <scope>DISCUSSION OF SEQUENCE</scope>
</reference>
<name>DPOL3_SACS2</name>
<proteinExistence type="inferred from homology"/>
<accession>P95979</accession>
<protein>
    <recommendedName>
        <fullName>DNA polymerase 3</fullName>
        <ecNumber>2.7.7.7</ecNumber>
    </recommendedName>
    <alternativeName>
        <fullName>DNA polymerase B3</fullName>
    </alternativeName>
    <alternativeName>
        <fullName>DNA polymerase III</fullName>
    </alternativeName>
</protein>
<feature type="chain" id="PRO_0000046486" description="DNA polymerase 3">
    <location>
        <begin position="1"/>
        <end position="764"/>
    </location>
</feature>
<gene>
    <name type="primary">dpo3</name>
    <name type="ordered locus">SSO0081</name>
    <name type="ORF">C04041</name>
    <name type="ORF">C05_029</name>
</gene>
<keyword id="KW-0235">DNA replication</keyword>
<keyword id="KW-0238">DNA-binding</keyword>
<keyword id="KW-0239">DNA-directed DNA polymerase</keyword>
<keyword id="KW-0548">Nucleotidyltransferase</keyword>
<keyword id="KW-1185">Reference proteome</keyword>
<keyword id="KW-0808">Transferase</keyword>
<comment type="catalytic activity">
    <reaction>
        <text>DNA(n) + a 2'-deoxyribonucleoside 5'-triphosphate = DNA(n+1) + diphosphate</text>
        <dbReference type="Rhea" id="RHEA:22508"/>
        <dbReference type="Rhea" id="RHEA-COMP:17339"/>
        <dbReference type="Rhea" id="RHEA-COMP:17340"/>
        <dbReference type="ChEBI" id="CHEBI:33019"/>
        <dbReference type="ChEBI" id="CHEBI:61560"/>
        <dbReference type="ChEBI" id="CHEBI:173112"/>
        <dbReference type="EC" id="2.7.7.7"/>
    </reaction>
</comment>
<comment type="similarity">
    <text evidence="1">Belongs to the DNA polymerase type-B family.</text>
</comment>
<evidence type="ECO:0000305" key="1"/>